<keyword id="KW-0004">4Fe-4S</keyword>
<keyword id="KW-0963">Cytoplasm</keyword>
<keyword id="KW-0408">Iron</keyword>
<keyword id="KW-0411">Iron-sulfur</keyword>
<keyword id="KW-0479">Metal-binding</keyword>
<keyword id="KW-0949">S-adenosyl-L-methionine</keyword>
<keyword id="KW-0808">Transferase</keyword>
<gene>
    <name evidence="1" type="primary">lipA</name>
    <name type="ordered locus">XCV0729</name>
</gene>
<accession>Q3BXQ3</accession>
<comment type="function">
    <text evidence="1">Catalyzes the radical-mediated insertion of two sulfur atoms into the C-6 and C-8 positions of the octanoyl moiety bound to the lipoyl domains of lipoate-dependent enzymes, thereby converting the octanoylated domains into lipoylated derivatives.</text>
</comment>
<comment type="catalytic activity">
    <reaction evidence="1">
        <text>[[Fe-S] cluster scaffold protein carrying a second [4Fe-4S](2+) cluster] + N(6)-octanoyl-L-lysyl-[protein] + 2 oxidized [2Fe-2S]-[ferredoxin] + 2 S-adenosyl-L-methionine + 4 H(+) = [[Fe-S] cluster scaffold protein] + N(6)-[(R)-dihydrolipoyl]-L-lysyl-[protein] + 4 Fe(3+) + 2 hydrogen sulfide + 2 5'-deoxyadenosine + 2 L-methionine + 2 reduced [2Fe-2S]-[ferredoxin]</text>
        <dbReference type="Rhea" id="RHEA:16585"/>
        <dbReference type="Rhea" id="RHEA-COMP:9928"/>
        <dbReference type="Rhea" id="RHEA-COMP:10000"/>
        <dbReference type="Rhea" id="RHEA-COMP:10001"/>
        <dbReference type="Rhea" id="RHEA-COMP:10475"/>
        <dbReference type="Rhea" id="RHEA-COMP:14568"/>
        <dbReference type="Rhea" id="RHEA-COMP:14569"/>
        <dbReference type="ChEBI" id="CHEBI:15378"/>
        <dbReference type="ChEBI" id="CHEBI:17319"/>
        <dbReference type="ChEBI" id="CHEBI:29034"/>
        <dbReference type="ChEBI" id="CHEBI:29919"/>
        <dbReference type="ChEBI" id="CHEBI:33722"/>
        <dbReference type="ChEBI" id="CHEBI:33737"/>
        <dbReference type="ChEBI" id="CHEBI:33738"/>
        <dbReference type="ChEBI" id="CHEBI:57844"/>
        <dbReference type="ChEBI" id="CHEBI:59789"/>
        <dbReference type="ChEBI" id="CHEBI:78809"/>
        <dbReference type="ChEBI" id="CHEBI:83100"/>
        <dbReference type="EC" id="2.8.1.8"/>
    </reaction>
</comment>
<comment type="cofactor">
    <cofactor evidence="1">
        <name>[4Fe-4S] cluster</name>
        <dbReference type="ChEBI" id="CHEBI:49883"/>
    </cofactor>
    <text evidence="1">Binds 2 [4Fe-4S] clusters per subunit. One cluster is coordinated with 3 cysteines and an exchangeable S-adenosyl-L-methionine.</text>
</comment>
<comment type="pathway">
    <text evidence="1">Protein modification; protein lipoylation via endogenous pathway; protein N(6)-(lipoyl)lysine from octanoyl-[acyl-carrier-protein]: step 2/2.</text>
</comment>
<comment type="subcellular location">
    <subcellularLocation>
        <location evidence="1">Cytoplasm</location>
    </subcellularLocation>
</comment>
<comment type="similarity">
    <text evidence="1">Belongs to the radical SAM superfamily. Lipoyl synthase family.</text>
</comment>
<reference key="1">
    <citation type="journal article" date="2005" name="J. Bacteriol.">
        <title>Insights into genome plasticity and pathogenicity of the plant pathogenic Bacterium Xanthomonas campestris pv. vesicatoria revealed by the complete genome sequence.</title>
        <authorList>
            <person name="Thieme F."/>
            <person name="Koebnik R."/>
            <person name="Bekel T."/>
            <person name="Berger C."/>
            <person name="Boch J."/>
            <person name="Buettner D."/>
            <person name="Caldana C."/>
            <person name="Gaigalat L."/>
            <person name="Goesmann A."/>
            <person name="Kay S."/>
            <person name="Kirchner O."/>
            <person name="Lanz C."/>
            <person name="Linke B."/>
            <person name="McHardy A.C."/>
            <person name="Meyer F."/>
            <person name="Mittenhuber G."/>
            <person name="Nies D.H."/>
            <person name="Niesbach-Kloesgen U."/>
            <person name="Patschkowski T."/>
            <person name="Rueckert C."/>
            <person name="Rupp O."/>
            <person name="Schneiker S."/>
            <person name="Schuster S.C."/>
            <person name="Vorhoelter F.J."/>
            <person name="Weber E."/>
            <person name="Puehler A."/>
            <person name="Bonas U."/>
            <person name="Bartels D."/>
            <person name="Kaiser O."/>
        </authorList>
    </citation>
    <scope>NUCLEOTIDE SEQUENCE [LARGE SCALE GENOMIC DNA]</scope>
    <source>
        <strain>85-10</strain>
    </source>
</reference>
<protein>
    <recommendedName>
        <fullName evidence="1">Lipoyl synthase</fullName>
        <ecNumber evidence="1">2.8.1.8</ecNumber>
    </recommendedName>
    <alternativeName>
        <fullName evidence="1">Lip-syn</fullName>
        <shortName evidence="1">LS</shortName>
    </alternativeName>
    <alternativeName>
        <fullName evidence="1">Lipoate synthase</fullName>
    </alternativeName>
    <alternativeName>
        <fullName evidence="1">Lipoic acid synthase</fullName>
    </alternativeName>
    <alternativeName>
        <fullName evidence="1">Sulfur insertion protein LipA</fullName>
    </alternativeName>
</protein>
<sequence>MTQPIARSIPLQVVSGDTAAPAPLQTGVKQIGGDKINRSPVQFVDAPVLRKPSWIRVRIPSGNAVQNLKAKLRENRLVTVCEEASCPNIHECFSHGTATFMILGEVCTRRCSFCDVAHGRPKPPDASEPASLAATVADMGLKYVVVTSVDRDDLRDGGAQHFVDCISAIRASSPNTRIEILTPDFRGKGRMDRALEILALSPPDVFNHNIETVPDLYPNVRPGADYQWSLTLLQRFKAQHPSIATKSGIMLGLGETMEQVQATLRDLRAHDVDMITIGQYLQPTPHHHPVMRYWTPEEYKALEDYGNALGFSHVASGPMVRSSYHADRQAAGAGVAA</sequence>
<proteinExistence type="inferred from homology"/>
<name>LIPA_XANE5</name>
<evidence type="ECO:0000255" key="1">
    <source>
        <dbReference type="HAMAP-Rule" id="MF_00206"/>
    </source>
</evidence>
<evidence type="ECO:0000255" key="2">
    <source>
        <dbReference type="PROSITE-ProRule" id="PRU01266"/>
    </source>
</evidence>
<dbReference type="EC" id="2.8.1.8" evidence="1"/>
<dbReference type="EMBL" id="AM039952">
    <property type="protein sequence ID" value="CAJ22360.1"/>
    <property type="molecule type" value="Genomic_DNA"/>
</dbReference>
<dbReference type="RefSeq" id="WP_008577899.1">
    <property type="nucleotide sequence ID" value="NZ_CP017190.1"/>
</dbReference>
<dbReference type="SMR" id="Q3BXQ3"/>
<dbReference type="STRING" id="456327.BJD11_19175"/>
<dbReference type="GeneID" id="93989922"/>
<dbReference type="KEGG" id="xcv:XCV0729"/>
<dbReference type="eggNOG" id="COG0320">
    <property type="taxonomic scope" value="Bacteria"/>
</dbReference>
<dbReference type="HOGENOM" id="CLU_033144_2_1_6"/>
<dbReference type="UniPathway" id="UPA00538">
    <property type="reaction ID" value="UER00593"/>
</dbReference>
<dbReference type="Proteomes" id="UP000007069">
    <property type="component" value="Chromosome"/>
</dbReference>
<dbReference type="GO" id="GO:0005737">
    <property type="term" value="C:cytoplasm"/>
    <property type="evidence" value="ECO:0007669"/>
    <property type="project" value="UniProtKB-SubCell"/>
</dbReference>
<dbReference type="GO" id="GO:0051539">
    <property type="term" value="F:4 iron, 4 sulfur cluster binding"/>
    <property type="evidence" value="ECO:0007669"/>
    <property type="project" value="UniProtKB-UniRule"/>
</dbReference>
<dbReference type="GO" id="GO:0016992">
    <property type="term" value="F:lipoate synthase activity"/>
    <property type="evidence" value="ECO:0007669"/>
    <property type="project" value="UniProtKB-UniRule"/>
</dbReference>
<dbReference type="GO" id="GO:0046872">
    <property type="term" value="F:metal ion binding"/>
    <property type="evidence" value="ECO:0007669"/>
    <property type="project" value="UniProtKB-KW"/>
</dbReference>
<dbReference type="CDD" id="cd01335">
    <property type="entry name" value="Radical_SAM"/>
    <property type="match status" value="1"/>
</dbReference>
<dbReference type="FunFam" id="3.20.20.70:FF:000023">
    <property type="entry name" value="Lipoyl synthase"/>
    <property type="match status" value="1"/>
</dbReference>
<dbReference type="Gene3D" id="3.20.20.70">
    <property type="entry name" value="Aldolase class I"/>
    <property type="match status" value="1"/>
</dbReference>
<dbReference type="HAMAP" id="MF_00206">
    <property type="entry name" value="Lipoyl_synth"/>
    <property type="match status" value="1"/>
</dbReference>
<dbReference type="InterPro" id="IPR013785">
    <property type="entry name" value="Aldolase_TIM"/>
</dbReference>
<dbReference type="InterPro" id="IPR006638">
    <property type="entry name" value="Elp3/MiaA/NifB-like_rSAM"/>
</dbReference>
<dbReference type="InterPro" id="IPR031691">
    <property type="entry name" value="LIAS_N"/>
</dbReference>
<dbReference type="InterPro" id="IPR003698">
    <property type="entry name" value="Lipoyl_synth"/>
</dbReference>
<dbReference type="InterPro" id="IPR007197">
    <property type="entry name" value="rSAM"/>
</dbReference>
<dbReference type="NCBIfam" id="TIGR00510">
    <property type="entry name" value="lipA"/>
    <property type="match status" value="1"/>
</dbReference>
<dbReference type="NCBIfam" id="NF004019">
    <property type="entry name" value="PRK05481.1"/>
    <property type="match status" value="1"/>
</dbReference>
<dbReference type="NCBIfam" id="NF009544">
    <property type="entry name" value="PRK12928.1"/>
    <property type="match status" value="1"/>
</dbReference>
<dbReference type="PANTHER" id="PTHR10949">
    <property type="entry name" value="LIPOYL SYNTHASE"/>
    <property type="match status" value="1"/>
</dbReference>
<dbReference type="PANTHER" id="PTHR10949:SF0">
    <property type="entry name" value="LIPOYL SYNTHASE, MITOCHONDRIAL"/>
    <property type="match status" value="1"/>
</dbReference>
<dbReference type="Pfam" id="PF16881">
    <property type="entry name" value="LIAS_N"/>
    <property type="match status" value="1"/>
</dbReference>
<dbReference type="Pfam" id="PF04055">
    <property type="entry name" value="Radical_SAM"/>
    <property type="match status" value="1"/>
</dbReference>
<dbReference type="PIRSF" id="PIRSF005963">
    <property type="entry name" value="Lipoyl_synth"/>
    <property type="match status" value="1"/>
</dbReference>
<dbReference type="SFLD" id="SFLDF00271">
    <property type="entry name" value="lipoyl_synthase"/>
    <property type="match status" value="1"/>
</dbReference>
<dbReference type="SFLD" id="SFLDS00029">
    <property type="entry name" value="Radical_SAM"/>
    <property type="match status" value="1"/>
</dbReference>
<dbReference type="SMART" id="SM00729">
    <property type="entry name" value="Elp3"/>
    <property type="match status" value="1"/>
</dbReference>
<dbReference type="SUPFAM" id="SSF102114">
    <property type="entry name" value="Radical SAM enzymes"/>
    <property type="match status" value="1"/>
</dbReference>
<dbReference type="PROSITE" id="PS51918">
    <property type="entry name" value="RADICAL_SAM"/>
    <property type="match status" value="1"/>
</dbReference>
<feature type="chain" id="PRO_1000012297" description="Lipoyl synthase">
    <location>
        <begin position="1"/>
        <end position="337"/>
    </location>
</feature>
<feature type="domain" description="Radical SAM core" evidence="2">
    <location>
        <begin position="93"/>
        <end position="312"/>
    </location>
</feature>
<feature type="binding site" evidence="1">
    <location>
        <position position="81"/>
    </location>
    <ligand>
        <name>[4Fe-4S] cluster</name>
        <dbReference type="ChEBI" id="CHEBI:49883"/>
        <label>1</label>
    </ligand>
</feature>
<feature type="binding site" evidence="1">
    <location>
        <position position="86"/>
    </location>
    <ligand>
        <name>[4Fe-4S] cluster</name>
        <dbReference type="ChEBI" id="CHEBI:49883"/>
        <label>1</label>
    </ligand>
</feature>
<feature type="binding site" evidence="1">
    <location>
        <position position="92"/>
    </location>
    <ligand>
        <name>[4Fe-4S] cluster</name>
        <dbReference type="ChEBI" id="CHEBI:49883"/>
        <label>1</label>
    </ligand>
</feature>
<feature type="binding site" evidence="1">
    <location>
        <position position="107"/>
    </location>
    <ligand>
        <name>[4Fe-4S] cluster</name>
        <dbReference type="ChEBI" id="CHEBI:49883"/>
        <label>2</label>
        <note>4Fe-4S-S-AdoMet</note>
    </ligand>
</feature>
<feature type="binding site" evidence="1">
    <location>
        <position position="111"/>
    </location>
    <ligand>
        <name>[4Fe-4S] cluster</name>
        <dbReference type="ChEBI" id="CHEBI:49883"/>
        <label>2</label>
        <note>4Fe-4S-S-AdoMet</note>
    </ligand>
</feature>
<feature type="binding site" evidence="1">
    <location>
        <position position="114"/>
    </location>
    <ligand>
        <name>[4Fe-4S] cluster</name>
        <dbReference type="ChEBI" id="CHEBI:49883"/>
        <label>2</label>
        <note>4Fe-4S-S-AdoMet</note>
    </ligand>
</feature>
<feature type="binding site" evidence="1">
    <location>
        <position position="323"/>
    </location>
    <ligand>
        <name>[4Fe-4S] cluster</name>
        <dbReference type="ChEBI" id="CHEBI:49883"/>
        <label>1</label>
    </ligand>
</feature>
<organism>
    <name type="scientific">Xanthomonas euvesicatoria pv. vesicatoria (strain 85-10)</name>
    <name type="common">Xanthomonas campestris pv. vesicatoria</name>
    <dbReference type="NCBI Taxonomy" id="316273"/>
    <lineage>
        <taxon>Bacteria</taxon>
        <taxon>Pseudomonadati</taxon>
        <taxon>Pseudomonadota</taxon>
        <taxon>Gammaproteobacteria</taxon>
        <taxon>Lysobacterales</taxon>
        <taxon>Lysobacteraceae</taxon>
        <taxon>Xanthomonas</taxon>
    </lineage>
</organism>